<proteinExistence type="inferred from homology"/>
<keyword id="KW-0963">Cytoplasm</keyword>
<keyword id="KW-0238">DNA-binding</keyword>
<keyword id="KW-1185">Reference proteome</keyword>
<keyword id="KW-0804">Transcription</keyword>
<keyword id="KW-0805">Transcription regulation</keyword>
<sequence length="253" mass="26867">MSGHSKWATTKHKKAVIDARRAKAFAKYIKNIEVAARAGGPDVAGNPALDLAVSKAKKASVPNDNIDRAVKRGAGLTGEVIDYAEIMYEVRGPQGSALLVECLTDNKNRAAADVRAAVTRNGGTMADSGSVSFLFERKGLVRLPAEGNTEDGLLEAVLEGGADAEEVVLSGDSFEILSDPSDLQSVAKALDEAGVEYESDELEFVPTMKVDLDASGARTFLRLTDALEDLDDVQNVFSNVDIAPEVLAELDED</sequence>
<name>Y1291_MICLC</name>
<evidence type="ECO:0000255" key="1">
    <source>
        <dbReference type="HAMAP-Rule" id="MF_00693"/>
    </source>
</evidence>
<protein>
    <recommendedName>
        <fullName evidence="1">Probable transcriptional regulatory protein Mlut_12910</fullName>
    </recommendedName>
</protein>
<dbReference type="EMBL" id="CP001628">
    <property type="protein sequence ID" value="ACS30796.1"/>
    <property type="molecule type" value="Genomic_DNA"/>
</dbReference>
<dbReference type="RefSeq" id="WP_010078569.1">
    <property type="nucleotide sequence ID" value="NC_012803.1"/>
</dbReference>
<dbReference type="SMR" id="C5CCI4"/>
<dbReference type="STRING" id="465515.Mlut_12910"/>
<dbReference type="EnsemblBacteria" id="ACS30796">
    <property type="protein sequence ID" value="ACS30796"/>
    <property type="gene ID" value="Mlut_12910"/>
</dbReference>
<dbReference type="GeneID" id="93345446"/>
<dbReference type="KEGG" id="mlu:Mlut_12910"/>
<dbReference type="PATRIC" id="fig|465515.4.peg.1232"/>
<dbReference type="eggNOG" id="COG0217">
    <property type="taxonomic scope" value="Bacteria"/>
</dbReference>
<dbReference type="HOGENOM" id="CLU_062974_2_2_11"/>
<dbReference type="Proteomes" id="UP000000738">
    <property type="component" value="Chromosome"/>
</dbReference>
<dbReference type="GO" id="GO:0005829">
    <property type="term" value="C:cytosol"/>
    <property type="evidence" value="ECO:0007669"/>
    <property type="project" value="TreeGrafter"/>
</dbReference>
<dbReference type="GO" id="GO:0003677">
    <property type="term" value="F:DNA binding"/>
    <property type="evidence" value="ECO:0007669"/>
    <property type="project" value="UniProtKB-UniRule"/>
</dbReference>
<dbReference type="GO" id="GO:0006355">
    <property type="term" value="P:regulation of DNA-templated transcription"/>
    <property type="evidence" value="ECO:0007669"/>
    <property type="project" value="UniProtKB-UniRule"/>
</dbReference>
<dbReference type="FunFam" id="1.10.10.200:FF:000002">
    <property type="entry name" value="Probable transcriptional regulatory protein CLM62_37755"/>
    <property type="match status" value="1"/>
</dbReference>
<dbReference type="Gene3D" id="1.10.10.200">
    <property type="match status" value="1"/>
</dbReference>
<dbReference type="Gene3D" id="3.30.70.980">
    <property type="match status" value="2"/>
</dbReference>
<dbReference type="HAMAP" id="MF_00693">
    <property type="entry name" value="Transcrip_reg_TACO1"/>
    <property type="match status" value="1"/>
</dbReference>
<dbReference type="InterPro" id="IPR017856">
    <property type="entry name" value="Integrase-like_N"/>
</dbReference>
<dbReference type="InterPro" id="IPR048300">
    <property type="entry name" value="TACO1_YebC-like_2nd/3rd_dom"/>
</dbReference>
<dbReference type="InterPro" id="IPR049083">
    <property type="entry name" value="TACO1_YebC_N"/>
</dbReference>
<dbReference type="InterPro" id="IPR002876">
    <property type="entry name" value="Transcrip_reg_TACO1-like"/>
</dbReference>
<dbReference type="InterPro" id="IPR026564">
    <property type="entry name" value="Transcrip_reg_TACO1-like_dom3"/>
</dbReference>
<dbReference type="InterPro" id="IPR029072">
    <property type="entry name" value="YebC-like"/>
</dbReference>
<dbReference type="NCBIfam" id="NF001030">
    <property type="entry name" value="PRK00110.1"/>
    <property type="match status" value="1"/>
</dbReference>
<dbReference type="NCBIfam" id="NF009044">
    <property type="entry name" value="PRK12378.1"/>
    <property type="match status" value="1"/>
</dbReference>
<dbReference type="NCBIfam" id="TIGR01033">
    <property type="entry name" value="YebC/PmpR family DNA-binding transcriptional regulator"/>
    <property type="match status" value="1"/>
</dbReference>
<dbReference type="PANTHER" id="PTHR12532:SF6">
    <property type="entry name" value="TRANSCRIPTIONAL REGULATORY PROTEIN YEBC-RELATED"/>
    <property type="match status" value="1"/>
</dbReference>
<dbReference type="PANTHER" id="PTHR12532">
    <property type="entry name" value="TRANSLATIONAL ACTIVATOR OF CYTOCHROME C OXIDASE 1"/>
    <property type="match status" value="1"/>
</dbReference>
<dbReference type="Pfam" id="PF20772">
    <property type="entry name" value="TACO1_YebC_N"/>
    <property type="match status" value="1"/>
</dbReference>
<dbReference type="Pfam" id="PF01709">
    <property type="entry name" value="Transcrip_reg"/>
    <property type="match status" value="1"/>
</dbReference>
<dbReference type="SUPFAM" id="SSF75625">
    <property type="entry name" value="YebC-like"/>
    <property type="match status" value="1"/>
</dbReference>
<gene>
    <name type="ordered locus">Mlut_12910</name>
</gene>
<accession>C5CCI4</accession>
<comment type="subcellular location">
    <subcellularLocation>
        <location evidence="1">Cytoplasm</location>
    </subcellularLocation>
</comment>
<comment type="similarity">
    <text evidence="1">Belongs to the TACO1 family.</text>
</comment>
<reference key="1">
    <citation type="journal article" date="2010" name="J. Bacteriol.">
        <title>Genome sequence of the Fleming strain of Micrococcus luteus, a simple free-living actinobacterium.</title>
        <authorList>
            <person name="Young M."/>
            <person name="Artsatbanov V."/>
            <person name="Beller H.R."/>
            <person name="Chandra G."/>
            <person name="Chater K.F."/>
            <person name="Dover L.G."/>
            <person name="Goh E.B."/>
            <person name="Kahan T."/>
            <person name="Kaprelyants A.S."/>
            <person name="Kyrpides N."/>
            <person name="Lapidus A."/>
            <person name="Lowry S.R."/>
            <person name="Lykidis A."/>
            <person name="Mahillon J."/>
            <person name="Markowitz V."/>
            <person name="Mavromatis K."/>
            <person name="Mukamolova G.V."/>
            <person name="Oren A."/>
            <person name="Rokem J.S."/>
            <person name="Smith M.C."/>
            <person name="Young D.I."/>
            <person name="Greenblatt C.L."/>
        </authorList>
    </citation>
    <scope>NUCLEOTIDE SEQUENCE [LARGE SCALE GENOMIC DNA]</scope>
    <source>
        <strain>ATCC 4698 / DSM 20030 / JCM 1464 / CCM 169 / CCUG 5858 / IAM 1056 / NBRC 3333 / NCIMB 9278 / NCTC 2665 / VKM Ac-2230</strain>
    </source>
</reference>
<organism>
    <name type="scientific">Micrococcus luteus (strain ATCC 4698 / DSM 20030 / JCM 1464 / CCM 169 / CCUG 5858 / IAM 1056 / NBRC 3333 / NCIMB 9278 / NCTC 2665 / VKM Ac-2230)</name>
    <name type="common">Micrococcus lysodeikticus</name>
    <dbReference type="NCBI Taxonomy" id="465515"/>
    <lineage>
        <taxon>Bacteria</taxon>
        <taxon>Bacillati</taxon>
        <taxon>Actinomycetota</taxon>
        <taxon>Actinomycetes</taxon>
        <taxon>Micrococcales</taxon>
        <taxon>Micrococcaceae</taxon>
        <taxon>Micrococcus</taxon>
    </lineage>
</organism>
<feature type="chain" id="PRO_1000212616" description="Probable transcriptional regulatory protein Mlut_12910">
    <location>
        <begin position="1"/>
        <end position="253"/>
    </location>
</feature>